<reference key="1">
    <citation type="journal article" date="2001" name="J. Bacteriol.">
        <title>Genome of the bacterium Streptococcus pneumoniae strain R6.</title>
        <authorList>
            <person name="Hoskins J."/>
            <person name="Alborn W.E. Jr."/>
            <person name="Arnold J."/>
            <person name="Blaszczak L.C."/>
            <person name="Burgett S."/>
            <person name="DeHoff B.S."/>
            <person name="Estrem S.T."/>
            <person name="Fritz L."/>
            <person name="Fu D.-J."/>
            <person name="Fuller W."/>
            <person name="Geringer C."/>
            <person name="Gilmour R."/>
            <person name="Glass J.S."/>
            <person name="Khoja H."/>
            <person name="Kraft A.R."/>
            <person name="Lagace R.E."/>
            <person name="LeBlanc D.J."/>
            <person name="Lee L.N."/>
            <person name="Lefkowitz E.J."/>
            <person name="Lu J."/>
            <person name="Matsushima P."/>
            <person name="McAhren S.M."/>
            <person name="McHenney M."/>
            <person name="McLeaster K."/>
            <person name="Mundy C.W."/>
            <person name="Nicas T.I."/>
            <person name="Norris F.H."/>
            <person name="O'Gara M."/>
            <person name="Peery R.B."/>
            <person name="Robertson G.T."/>
            <person name="Rockey P."/>
            <person name="Sun P.-M."/>
            <person name="Winkler M.E."/>
            <person name="Yang Y."/>
            <person name="Young-Bellido M."/>
            <person name="Zhao G."/>
            <person name="Zook C.A."/>
            <person name="Baltz R.H."/>
            <person name="Jaskunas S.R."/>
            <person name="Rosteck P.R. Jr."/>
            <person name="Skatrud P.L."/>
            <person name="Glass J.I."/>
        </authorList>
    </citation>
    <scope>NUCLEOTIDE SEQUENCE [LARGE SCALE GENOMIC DNA]</scope>
    <source>
        <strain>ATCC BAA-255 / R6</strain>
    </source>
</reference>
<sequence length="502" mass="55850">MSQEKYIMAIDQGTTSSRAIIFNKKGEKVSSSQKEFTQIFPQAGWVEHNANEIWNSVQSVIAGAFIESGVKPNQIEAIGITNQRETTVVWDKKTGLPIYNAIVWQSRQTAPLAEQLKSQGYVEKFHEKTGLIIDAYFSATKVRWILDHVEGAQERAEKGELLFGTIDTWLVWKLTDGAAHVTDYSNAARTMLYNIKELKWDDEILEILNIPKAILPEVRSNSEIYGKTAPFHFYGGEVPISGMAGDQQAALFGQLAFEPGMVKNTYGTGSFIIMNTGEEMQLSENNLLTTIGYGINGKVYYALEGSIFIAGSAIQWLRDGLRMVENSPESEKYARDSHNNDEVYVVPAFTGLGAPYWNQNARGSVFGLTRGTSKEDFIKATLQSIAYQVRDIIDTMQVDTQTAIQVLKVDGGAAMNNFLMQFQADILGIDIARAKNLETTALGAAFLAGLSVGYWKDLDELKLLNETGELFEPSMNESRKEQLYKGWKKAVKATQVFAEVDD</sequence>
<organism>
    <name type="scientific">Streptococcus pneumoniae (strain ATCC BAA-255 / R6)</name>
    <dbReference type="NCBI Taxonomy" id="171101"/>
    <lineage>
        <taxon>Bacteria</taxon>
        <taxon>Bacillati</taxon>
        <taxon>Bacillota</taxon>
        <taxon>Bacilli</taxon>
        <taxon>Lactobacillales</taxon>
        <taxon>Streptococcaceae</taxon>
        <taxon>Streptococcus</taxon>
    </lineage>
</organism>
<gene>
    <name evidence="1" type="primary">glpK</name>
    <name type="ordered locus">spr1991</name>
</gene>
<feature type="chain" id="PRO_0000059506" description="Glycerol kinase">
    <location>
        <begin position="1"/>
        <end position="502"/>
    </location>
</feature>
<feature type="binding site" evidence="1">
    <location>
        <position position="14"/>
    </location>
    <ligand>
        <name>ADP</name>
        <dbReference type="ChEBI" id="CHEBI:456216"/>
    </ligand>
</feature>
<feature type="binding site" evidence="1">
    <location>
        <position position="14"/>
    </location>
    <ligand>
        <name>ATP</name>
        <dbReference type="ChEBI" id="CHEBI:30616"/>
    </ligand>
</feature>
<feature type="binding site" evidence="1">
    <location>
        <position position="14"/>
    </location>
    <ligand>
        <name>sn-glycerol 3-phosphate</name>
        <dbReference type="ChEBI" id="CHEBI:57597"/>
    </ligand>
</feature>
<feature type="binding site" evidence="1">
    <location>
        <position position="15"/>
    </location>
    <ligand>
        <name>ATP</name>
        <dbReference type="ChEBI" id="CHEBI:30616"/>
    </ligand>
</feature>
<feature type="binding site" evidence="1">
    <location>
        <position position="16"/>
    </location>
    <ligand>
        <name>ATP</name>
        <dbReference type="ChEBI" id="CHEBI:30616"/>
    </ligand>
</feature>
<feature type="binding site" evidence="1">
    <location>
        <position position="18"/>
    </location>
    <ligand>
        <name>ADP</name>
        <dbReference type="ChEBI" id="CHEBI:456216"/>
    </ligand>
</feature>
<feature type="binding site" evidence="1">
    <location>
        <position position="84"/>
    </location>
    <ligand>
        <name>glycerol</name>
        <dbReference type="ChEBI" id="CHEBI:17754"/>
    </ligand>
</feature>
<feature type="binding site" evidence="1">
    <location>
        <position position="84"/>
    </location>
    <ligand>
        <name>sn-glycerol 3-phosphate</name>
        <dbReference type="ChEBI" id="CHEBI:57597"/>
    </ligand>
</feature>
<feature type="binding site" evidence="1">
    <location>
        <position position="85"/>
    </location>
    <ligand>
        <name>glycerol</name>
        <dbReference type="ChEBI" id="CHEBI:17754"/>
    </ligand>
</feature>
<feature type="binding site" evidence="1">
    <location>
        <position position="85"/>
    </location>
    <ligand>
        <name>sn-glycerol 3-phosphate</name>
        <dbReference type="ChEBI" id="CHEBI:57597"/>
    </ligand>
</feature>
<feature type="binding site" evidence="1">
    <location>
        <position position="136"/>
    </location>
    <ligand>
        <name>glycerol</name>
        <dbReference type="ChEBI" id="CHEBI:17754"/>
    </ligand>
</feature>
<feature type="binding site" evidence="1">
    <location>
        <position position="136"/>
    </location>
    <ligand>
        <name>sn-glycerol 3-phosphate</name>
        <dbReference type="ChEBI" id="CHEBI:57597"/>
    </ligand>
</feature>
<feature type="binding site" evidence="1">
    <location>
        <position position="246"/>
    </location>
    <ligand>
        <name>glycerol</name>
        <dbReference type="ChEBI" id="CHEBI:17754"/>
    </ligand>
</feature>
<feature type="binding site" evidence="1">
    <location>
        <position position="246"/>
    </location>
    <ligand>
        <name>sn-glycerol 3-phosphate</name>
        <dbReference type="ChEBI" id="CHEBI:57597"/>
    </ligand>
</feature>
<feature type="binding site" evidence="1">
    <location>
        <position position="247"/>
    </location>
    <ligand>
        <name>glycerol</name>
        <dbReference type="ChEBI" id="CHEBI:17754"/>
    </ligand>
</feature>
<feature type="binding site" evidence="1">
    <location>
        <position position="268"/>
    </location>
    <ligand>
        <name>ADP</name>
        <dbReference type="ChEBI" id="CHEBI:456216"/>
    </ligand>
</feature>
<feature type="binding site" evidence="1">
    <location>
        <position position="268"/>
    </location>
    <ligand>
        <name>ATP</name>
        <dbReference type="ChEBI" id="CHEBI:30616"/>
    </ligand>
</feature>
<feature type="binding site" evidence="1">
    <location>
        <position position="311"/>
    </location>
    <ligand>
        <name>ADP</name>
        <dbReference type="ChEBI" id="CHEBI:456216"/>
    </ligand>
</feature>
<feature type="binding site" evidence="1">
    <location>
        <position position="311"/>
    </location>
    <ligand>
        <name>ATP</name>
        <dbReference type="ChEBI" id="CHEBI:30616"/>
    </ligand>
</feature>
<feature type="binding site" evidence="1">
    <location>
        <position position="315"/>
    </location>
    <ligand>
        <name>ATP</name>
        <dbReference type="ChEBI" id="CHEBI:30616"/>
    </ligand>
</feature>
<feature type="binding site" evidence="1">
    <location>
        <position position="412"/>
    </location>
    <ligand>
        <name>ADP</name>
        <dbReference type="ChEBI" id="CHEBI:456216"/>
    </ligand>
</feature>
<feature type="binding site" evidence="1">
    <location>
        <position position="412"/>
    </location>
    <ligand>
        <name>ATP</name>
        <dbReference type="ChEBI" id="CHEBI:30616"/>
    </ligand>
</feature>
<feature type="binding site" evidence="1">
    <location>
        <position position="416"/>
    </location>
    <ligand>
        <name>ADP</name>
        <dbReference type="ChEBI" id="CHEBI:456216"/>
    </ligand>
</feature>
<feature type="modified residue" description="Phosphohistidine; by HPr" evidence="1">
    <location>
        <position position="232"/>
    </location>
</feature>
<name>GLPK_STRR6</name>
<accession>P63743</accession>
<accession>Q97N78</accession>
<dbReference type="EC" id="2.7.1.30" evidence="1"/>
<dbReference type="EMBL" id="AE007317">
    <property type="protein sequence ID" value="AAL00793.1"/>
    <property type="molecule type" value="Genomic_DNA"/>
</dbReference>
<dbReference type="PIR" id="D98120">
    <property type="entry name" value="D98120"/>
</dbReference>
<dbReference type="RefSeq" id="NP_359582.1">
    <property type="nucleotide sequence ID" value="NC_003098.1"/>
</dbReference>
<dbReference type="RefSeq" id="WP_000076776.1">
    <property type="nucleotide sequence ID" value="NC_003098.1"/>
</dbReference>
<dbReference type="SMR" id="P63743"/>
<dbReference type="STRING" id="171101.spr1991"/>
<dbReference type="KEGG" id="spr:spr1991"/>
<dbReference type="PATRIC" id="fig|171101.6.peg.2155"/>
<dbReference type="eggNOG" id="COG0554">
    <property type="taxonomic scope" value="Bacteria"/>
</dbReference>
<dbReference type="HOGENOM" id="CLU_009281_2_3_9"/>
<dbReference type="UniPathway" id="UPA00618">
    <property type="reaction ID" value="UER00672"/>
</dbReference>
<dbReference type="Proteomes" id="UP000000586">
    <property type="component" value="Chromosome"/>
</dbReference>
<dbReference type="GO" id="GO:0005829">
    <property type="term" value="C:cytosol"/>
    <property type="evidence" value="ECO:0000318"/>
    <property type="project" value="GO_Central"/>
</dbReference>
<dbReference type="GO" id="GO:0005524">
    <property type="term" value="F:ATP binding"/>
    <property type="evidence" value="ECO:0007669"/>
    <property type="project" value="UniProtKB-UniRule"/>
</dbReference>
<dbReference type="GO" id="GO:0004370">
    <property type="term" value="F:glycerol kinase activity"/>
    <property type="evidence" value="ECO:0000250"/>
    <property type="project" value="UniProtKB"/>
</dbReference>
<dbReference type="GO" id="GO:0019563">
    <property type="term" value="P:glycerol catabolic process"/>
    <property type="evidence" value="ECO:0000318"/>
    <property type="project" value="GO_Central"/>
</dbReference>
<dbReference type="GO" id="GO:0006071">
    <property type="term" value="P:glycerol metabolic process"/>
    <property type="evidence" value="ECO:0000250"/>
    <property type="project" value="UniProtKB"/>
</dbReference>
<dbReference type="GO" id="GO:0006072">
    <property type="term" value="P:glycerol-3-phosphate metabolic process"/>
    <property type="evidence" value="ECO:0007669"/>
    <property type="project" value="InterPro"/>
</dbReference>
<dbReference type="CDD" id="cd07786">
    <property type="entry name" value="FGGY_EcGK_like"/>
    <property type="match status" value="1"/>
</dbReference>
<dbReference type="FunFam" id="3.30.420.40:FF:000007">
    <property type="entry name" value="Glycerol kinase"/>
    <property type="match status" value="1"/>
</dbReference>
<dbReference type="FunFam" id="3.30.420.40:FF:000008">
    <property type="entry name" value="Glycerol kinase"/>
    <property type="match status" value="1"/>
</dbReference>
<dbReference type="Gene3D" id="3.30.420.40">
    <property type="match status" value="2"/>
</dbReference>
<dbReference type="HAMAP" id="MF_00186">
    <property type="entry name" value="Glycerol_kin"/>
    <property type="match status" value="1"/>
</dbReference>
<dbReference type="InterPro" id="IPR043129">
    <property type="entry name" value="ATPase_NBD"/>
</dbReference>
<dbReference type="InterPro" id="IPR000577">
    <property type="entry name" value="Carb_kinase_FGGY"/>
</dbReference>
<dbReference type="InterPro" id="IPR018483">
    <property type="entry name" value="Carb_kinase_FGGY_CS"/>
</dbReference>
<dbReference type="InterPro" id="IPR018485">
    <property type="entry name" value="FGGY_C"/>
</dbReference>
<dbReference type="InterPro" id="IPR018484">
    <property type="entry name" value="FGGY_N"/>
</dbReference>
<dbReference type="InterPro" id="IPR005999">
    <property type="entry name" value="Glycerol_kin"/>
</dbReference>
<dbReference type="NCBIfam" id="TIGR01311">
    <property type="entry name" value="glycerol_kin"/>
    <property type="match status" value="1"/>
</dbReference>
<dbReference type="NCBIfam" id="NF000756">
    <property type="entry name" value="PRK00047.1"/>
    <property type="match status" value="1"/>
</dbReference>
<dbReference type="PANTHER" id="PTHR10196:SF69">
    <property type="entry name" value="GLYCEROL KINASE"/>
    <property type="match status" value="1"/>
</dbReference>
<dbReference type="PANTHER" id="PTHR10196">
    <property type="entry name" value="SUGAR KINASE"/>
    <property type="match status" value="1"/>
</dbReference>
<dbReference type="Pfam" id="PF02782">
    <property type="entry name" value="FGGY_C"/>
    <property type="match status" value="1"/>
</dbReference>
<dbReference type="Pfam" id="PF00370">
    <property type="entry name" value="FGGY_N"/>
    <property type="match status" value="1"/>
</dbReference>
<dbReference type="PIRSF" id="PIRSF000538">
    <property type="entry name" value="GlpK"/>
    <property type="match status" value="1"/>
</dbReference>
<dbReference type="SUPFAM" id="SSF53067">
    <property type="entry name" value="Actin-like ATPase domain"/>
    <property type="match status" value="2"/>
</dbReference>
<dbReference type="PROSITE" id="PS00933">
    <property type="entry name" value="FGGY_KINASES_1"/>
    <property type="match status" value="1"/>
</dbReference>
<dbReference type="PROSITE" id="PS00445">
    <property type="entry name" value="FGGY_KINASES_2"/>
    <property type="match status" value="1"/>
</dbReference>
<protein>
    <recommendedName>
        <fullName evidence="1">Glycerol kinase</fullName>
        <ecNumber evidence="1">2.7.1.30</ecNumber>
    </recommendedName>
    <alternativeName>
        <fullName evidence="1">ATP:glycerol 3-phosphotransferase</fullName>
    </alternativeName>
    <alternativeName>
        <fullName evidence="1">Glycerokinase</fullName>
        <shortName evidence="1">GK</shortName>
    </alternativeName>
</protein>
<keyword id="KW-0067">ATP-binding</keyword>
<keyword id="KW-0319">Glycerol metabolism</keyword>
<keyword id="KW-0418">Kinase</keyword>
<keyword id="KW-0547">Nucleotide-binding</keyword>
<keyword id="KW-0597">Phosphoprotein</keyword>
<keyword id="KW-1185">Reference proteome</keyword>
<keyword id="KW-0808">Transferase</keyword>
<proteinExistence type="inferred from homology"/>
<comment type="function">
    <text evidence="1">Key enzyme in the regulation of glycerol uptake and metabolism. Catalyzes the phosphorylation of glycerol to yield sn-glycerol 3-phosphate.</text>
</comment>
<comment type="catalytic activity">
    <reaction evidence="1">
        <text>glycerol + ATP = sn-glycerol 3-phosphate + ADP + H(+)</text>
        <dbReference type="Rhea" id="RHEA:21644"/>
        <dbReference type="ChEBI" id="CHEBI:15378"/>
        <dbReference type="ChEBI" id="CHEBI:17754"/>
        <dbReference type="ChEBI" id="CHEBI:30616"/>
        <dbReference type="ChEBI" id="CHEBI:57597"/>
        <dbReference type="ChEBI" id="CHEBI:456216"/>
        <dbReference type="EC" id="2.7.1.30"/>
    </reaction>
</comment>
<comment type="activity regulation">
    <text evidence="1">Activated by phosphorylation and inhibited by fructose 1,6-bisphosphate (FBP).</text>
</comment>
<comment type="pathway">
    <text evidence="1">Polyol metabolism; glycerol degradation via glycerol kinase pathway; sn-glycerol 3-phosphate from glycerol: step 1/1.</text>
</comment>
<comment type="subunit">
    <text evidence="1">Homotetramer and homodimer (in equilibrium).</text>
</comment>
<comment type="PTM">
    <text evidence="1">The phosphoenolpyruvate-dependent sugar phosphotransferase system (PTS), including enzyme I, and histidine-containing protein (HPr) are required for the phosphorylation, which leads to the activation of the enzyme.</text>
</comment>
<comment type="similarity">
    <text evidence="1">Belongs to the FGGY kinase family.</text>
</comment>
<evidence type="ECO:0000255" key="1">
    <source>
        <dbReference type="HAMAP-Rule" id="MF_00186"/>
    </source>
</evidence>